<keyword id="KW-0472">Membrane</keyword>
<keyword id="KW-0496">Mitochondrion</keyword>
<keyword id="KW-0999">Mitochondrion inner membrane</keyword>
<keyword id="KW-1185">Reference proteome</keyword>
<keyword id="KW-0812">Transmembrane</keyword>
<keyword id="KW-1133">Transmembrane helix</keyword>
<accession>Q5RAY9</accession>
<organism>
    <name type="scientific">Pongo abelii</name>
    <name type="common">Sumatran orangutan</name>
    <name type="synonym">Pongo pygmaeus abelii</name>
    <dbReference type="NCBI Taxonomy" id="9601"/>
    <lineage>
        <taxon>Eukaryota</taxon>
        <taxon>Metazoa</taxon>
        <taxon>Chordata</taxon>
        <taxon>Craniata</taxon>
        <taxon>Vertebrata</taxon>
        <taxon>Euteleostomi</taxon>
        <taxon>Mammalia</taxon>
        <taxon>Eutheria</taxon>
        <taxon>Euarchontoglires</taxon>
        <taxon>Primates</taxon>
        <taxon>Haplorrhini</taxon>
        <taxon>Catarrhini</taxon>
        <taxon>Hominidae</taxon>
        <taxon>Pongo</taxon>
    </lineage>
</organism>
<feature type="chain" id="PRO_0000271001" description="Transmembrane protein 126A">
    <location>
        <begin position="1"/>
        <end position="196"/>
    </location>
</feature>
<feature type="topological domain" description="Mitochondrial matrix" evidence="2">
    <location>
        <begin position="1"/>
        <end position="34"/>
    </location>
</feature>
<feature type="transmembrane region" description="Helical" evidence="2">
    <location>
        <begin position="35"/>
        <end position="55"/>
    </location>
</feature>
<feature type="topological domain" description="Mitochondrial intermembrane" evidence="2">
    <location>
        <begin position="56"/>
        <end position="57"/>
    </location>
</feature>
<feature type="transmembrane region" description="Helical" evidence="2">
    <location>
        <begin position="58"/>
        <end position="78"/>
    </location>
</feature>
<feature type="topological domain" description="Mitochondrial matrix" evidence="2">
    <location>
        <begin position="79"/>
        <end position="107"/>
    </location>
</feature>
<feature type="transmembrane region" description="Helical" evidence="2">
    <location>
        <begin position="108"/>
        <end position="128"/>
    </location>
</feature>
<feature type="topological domain" description="Mitochondrial intermembrane" evidence="2">
    <location>
        <begin position="129"/>
        <end position="159"/>
    </location>
</feature>
<feature type="transmembrane region" description="Helical" evidence="2">
    <location>
        <begin position="160"/>
        <end position="176"/>
    </location>
</feature>
<feature type="topological domain" description="Mitochondrial matrix" evidence="2">
    <location>
        <begin position="177"/>
        <end position="196"/>
    </location>
</feature>
<comment type="function">
    <text evidence="1">Protein required for the cotranslational protein quality control in the inner membrane of the mitochondria. Associates with newly synthesized polypeptides and may act as a chaperone that cooperates with OXA1L for the insertion of newly synthesized mitochondrial proteins into the inner membrane. Required for the assembly of the ND4 module of mitochondrial complex I.</text>
</comment>
<comment type="subunit">
    <text evidence="1">Interacts with OXA1L; promoting cotranslational quality control in mitochondria.</text>
</comment>
<comment type="subcellular location">
    <subcellularLocation>
        <location evidence="1">Mitochondrion inner membrane</location>
        <topology evidence="1">Multi-pass membrane protein</topology>
    </subcellularLocation>
</comment>
<comment type="similarity">
    <text evidence="3">Belongs to the TMEM126 family.</text>
</comment>
<reference key="1">
    <citation type="submission" date="2004-11" db="EMBL/GenBank/DDBJ databases">
        <authorList>
            <consortium name="The German cDNA consortium"/>
        </authorList>
    </citation>
    <scope>NUCLEOTIDE SEQUENCE [LARGE SCALE MRNA]</scope>
    <source>
        <tissue>Heart</tissue>
    </source>
</reference>
<gene>
    <name type="primary">TMEM126A</name>
</gene>
<protein>
    <recommendedName>
        <fullName>Transmembrane protein 126A</fullName>
    </recommendedName>
</protein>
<name>T126A_PONAB</name>
<dbReference type="EMBL" id="CR858872">
    <property type="protein sequence ID" value="CAH91071.1"/>
    <property type="molecule type" value="mRNA"/>
</dbReference>
<dbReference type="RefSeq" id="NP_001127371.1">
    <property type="nucleotide sequence ID" value="NM_001133899.1"/>
</dbReference>
<dbReference type="FunCoup" id="Q5RAY9">
    <property type="interactions" value="1273"/>
</dbReference>
<dbReference type="STRING" id="9601.ENSPPYP00000004273"/>
<dbReference type="Ensembl" id="ENSPPYT00000004447.3">
    <property type="protein sequence ID" value="ENSPPYP00000004273.2"/>
    <property type="gene ID" value="ENSPPYG00000003738.3"/>
</dbReference>
<dbReference type="GeneID" id="100174436"/>
<dbReference type="KEGG" id="pon:100174436"/>
<dbReference type="CTD" id="84233"/>
<dbReference type="eggNOG" id="ENOG502RYF0">
    <property type="taxonomic scope" value="Eukaryota"/>
</dbReference>
<dbReference type="GeneTree" id="ENSGT00520000055616"/>
<dbReference type="HOGENOM" id="CLU_105475_1_0_1"/>
<dbReference type="InParanoid" id="Q5RAY9"/>
<dbReference type="OrthoDB" id="6234762at2759"/>
<dbReference type="TreeFam" id="TF327069"/>
<dbReference type="Proteomes" id="UP000001595">
    <property type="component" value="Chromosome 11"/>
</dbReference>
<dbReference type="GO" id="GO:0005743">
    <property type="term" value="C:mitochondrial inner membrane"/>
    <property type="evidence" value="ECO:0000250"/>
    <property type="project" value="UniProtKB"/>
</dbReference>
<dbReference type="GO" id="GO:0005739">
    <property type="term" value="C:mitochondrion"/>
    <property type="evidence" value="ECO:0000250"/>
    <property type="project" value="UniProtKB"/>
</dbReference>
<dbReference type="GO" id="GO:0141164">
    <property type="term" value="P:mitochondrial protein quality control"/>
    <property type="evidence" value="ECO:0000250"/>
    <property type="project" value="UniProtKB"/>
</dbReference>
<dbReference type="GO" id="GO:0032981">
    <property type="term" value="P:mitochondrial respiratory chain complex I assembly"/>
    <property type="evidence" value="ECO:0000250"/>
    <property type="project" value="UniProtKB"/>
</dbReference>
<dbReference type="GO" id="GO:0032979">
    <property type="term" value="P:protein insertion into mitochondrial inner membrane from matrix"/>
    <property type="evidence" value="ECO:0000250"/>
    <property type="project" value="UniProtKB"/>
</dbReference>
<dbReference type="InterPro" id="IPR009801">
    <property type="entry name" value="TMEM126"/>
</dbReference>
<dbReference type="PANTHER" id="PTHR16296:SF4">
    <property type="entry name" value="TRANSMEMBRANE PROTEIN 126A"/>
    <property type="match status" value="1"/>
</dbReference>
<dbReference type="PANTHER" id="PTHR16296">
    <property type="entry name" value="UNCHARACTERIZED HYPOTHALAMUS PROTEIN HT007"/>
    <property type="match status" value="1"/>
</dbReference>
<dbReference type="Pfam" id="PF07114">
    <property type="entry name" value="TMEM126"/>
    <property type="match status" value="1"/>
</dbReference>
<sequence>MENHKSNNTKENITIVDISRKINQLPEAERNLLEHGSVYVGLNAALCGLIANSLFRRILNVTKARIAAGLPMAWIPFLTTDITYRCFVSFPLNTGDLDCETCTITRSGLIGLVIGGLYPVFLAIPVNGGLAARYQSALLPHKGNILSYWIRTSKPVFRKMLFPIMLQTMFSAYLGSEQYKLLIKALQLSEPGKEIH</sequence>
<evidence type="ECO:0000250" key="1">
    <source>
        <dbReference type="UniProtKB" id="Q9H061"/>
    </source>
</evidence>
<evidence type="ECO:0000255" key="2"/>
<evidence type="ECO:0000305" key="3"/>
<proteinExistence type="evidence at transcript level"/>